<dbReference type="EMBL" id="AAHF01000006">
    <property type="protein sequence ID" value="EAL89123.2"/>
    <property type="molecule type" value="Genomic_DNA"/>
</dbReference>
<dbReference type="RefSeq" id="XP_751161.2">
    <property type="nucleotide sequence ID" value="XM_746068.2"/>
</dbReference>
<dbReference type="SMR" id="Q4WLP1"/>
<dbReference type="FunCoup" id="Q4WLP1">
    <property type="interactions" value="866"/>
</dbReference>
<dbReference type="STRING" id="330879.Q4WLP1"/>
<dbReference type="EnsemblFungi" id="EAL89123">
    <property type="protein sequence ID" value="EAL89123"/>
    <property type="gene ID" value="AFUA_6G12830"/>
</dbReference>
<dbReference type="GeneID" id="3508468"/>
<dbReference type="KEGG" id="afm:AFUA_6G12830"/>
<dbReference type="eggNOG" id="KOG1985">
    <property type="taxonomic scope" value="Eukaryota"/>
</dbReference>
<dbReference type="HOGENOM" id="CLU_004589_2_1_1"/>
<dbReference type="InParanoid" id="Q4WLP1"/>
<dbReference type="OMA" id="AVECSKQ"/>
<dbReference type="OrthoDB" id="49016at2759"/>
<dbReference type="Proteomes" id="UP000002530">
    <property type="component" value="Chromosome 6"/>
</dbReference>
<dbReference type="GO" id="GO:0005801">
    <property type="term" value="C:cis-Golgi network"/>
    <property type="evidence" value="ECO:0007669"/>
    <property type="project" value="EnsemblFungi"/>
</dbReference>
<dbReference type="GO" id="GO:0030127">
    <property type="term" value="C:COPII vesicle coat"/>
    <property type="evidence" value="ECO:0000318"/>
    <property type="project" value="GO_Central"/>
</dbReference>
<dbReference type="GO" id="GO:0070971">
    <property type="term" value="C:endoplasmic reticulum exit site"/>
    <property type="evidence" value="ECO:0000318"/>
    <property type="project" value="GO_Central"/>
</dbReference>
<dbReference type="GO" id="GO:0005789">
    <property type="term" value="C:endoplasmic reticulum membrane"/>
    <property type="evidence" value="ECO:0007669"/>
    <property type="project" value="UniProtKB-SubCell"/>
</dbReference>
<dbReference type="GO" id="GO:1990753">
    <property type="term" value="C:equatorial cell cortex"/>
    <property type="evidence" value="ECO:0007669"/>
    <property type="project" value="EnsemblFungi"/>
</dbReference>
<dbReference type="GO" id="GO:0000139">
    <property type="term" value="C:Golgi membrane"/>
    <property type="evidence" value="ECO:0007669"/>
    <property type="project" value="UniProtKB-SubCell"/>
</dbReference>
<dbReference type="GO" id="GO:0000149">
    <property type="term" value="F:SNARE binding"/>
    <property type="evidence" value="ECO:0000318"/>
    <property type="project" value="GO_Central"/>
</dbReference>
<dbReference type="GO" id="GO:0008270">
    <property type="term" value="F:zinc ion binding"/>
    <property type="evidence" value="ECO:0000318"/>
    <property type="project" value="GO_Central"/>
</dbReference>
<dbReference type="GO" id="GO:0090110">
    <property type="term" value="P:COPII-coated vesicle cargo loading"/>
    <property type="evidence" value="ECO:0000318"/>
    <property type="project" value="GO_Central"/>
</dbReference>
<dbReference type="GO" id="GO:0006886">
    <property type="term" value="P:intracellular protein transport"/>
    <property type="evidence" value="ECO:0007669"/>
    <property type="project" value="InterPro"/>
</dbReference>
<dbReference type="CDD" id="cd01479">
    <property type="entry name" value="Sec24-like"/>
    <property type="match status" value="1"/>
</dbReference>
<dbReference type="Gene3D" id="2.60.40.1670">
    <property type="entry name" value="beta-sandwich domain of Sec23/24"/>
    <property type="match status" value="1"/>
</dbReference>
<dbReference type="Gene3D" id="1.20.120.730">
    <property type="entry name" value="Sec23/Sec24 helical domain"/>
    <property type="match status" value="1"/>
</dbReference>
<dbReference type="Gene3D" id="3.40.20.10">
    <property type="entry name" value="Severin"/>
    <property type="match status" value="1"/>
</dbReference>
<dbReference type="Gene3D" id="3.40.50.410">
    <property type="entry name" value="von Willebrand factor, type A domain"/>
    <property type="match status" value="1"/>
</dbReference>
<dbReference type="Gene3D" id="2.30.30.380">
    <property type="entry name" value="Zn-finger domain of Sec23/24"/>
    <property type="match status" value="1"/>
</dbReference>
<dbReference type="InterPro" id="IPR029006">
    <property type="entry name" value="ADF-H/Gelsolin-like_dom_sf"/>
</dbReference>
<dbReference type="InterPro" id="IPR007123">
    <property type="entry name" value="Gelsolin-like_dom"/>
</dbReference>
<dbReference type="InterPro" id="IPR036180">
    <property type="entry name" value="Gelsolin-like_dom_sf"/>
</dbReference>
<dbReference type="InterPro" id="IPR006900">
    <property type="entry name" value="Sec23/24_helical_dom"/>
</dbReference>
<dbReference type="InterPro" id="IPR036175">
    <property type="entry name" value="Sec23/24_helical_dom_sf"/>
</dbReference>
<dbReference type="InterPro" id="IPR006896">
    <property type="entry name" value="Sec23/24_trunk_dom"/>
</dbReference>
<dbReference type="InterPro" id="IPR012990">
    <property type="entry name" value="Sec23_24_beta_S"/>
</dbReference>
<dbReference type="InterPro" id="IPR050550">
    <property type="entry name" value="SEC23_SEC24_subfamily"/>
</dbReference>
<dbReference type="InterPro" id="IPR041742">
    <property type="entry name" value="Sec24-like_trunk_dom"/>
</dbReference>
<dbReference type="InterPro" id="IPR036465">
    <property type="entry name" value="vWFA_dom_sf"/>
</dbReference>
<dbReference type="InterPro" id="IPR006895">
    <property type="entry name" value="Znf_Sec23_Sec24"/>
</dbReference>
<dbReference type="InterPro" id="IPR036174">
    <property type="entry name" value="Znf_Sec23_Sec24_sf"/>
</dbReference>
<dbReference type="PANTHER" id="PTHR13803">
    <property type="entry name" value="SEC24-RELATED PROTEIN"/>
    <property type="match status" value="1"/>
</dbReference>
<dbReference type="PANTHER" id="PTHR13803:SF39">
    <property type="entry name" value="SECRETORY 24AB, ISOFORM A"/>
    <property type="match status" value="1"/>
</dbReference>
<dbReference type="Pfam" id="PF00626">
    <property type="entry name" value="Gelsolin"/>
    <property type="match status" value="1"/>
</dbReference>
<dbReference type="Pfam" id="PF08033">
    <property type="entry name" value="Sec23_BS"/>
    <property type="match status" value="1"/>
</dbReference>
<dbReference type="Pfam" id="PF04815">
    <property type="entry name" value="Sec23_helical"/>
    <property type="match status" value="1"/>
</dbReference>
<dbReference type="Pfam" id="PF04811">
    <property type="entry name" value="Sec23_trunk"/>
    <property type="match status" value="1"/>
</dbReference>
<dbReference type="Pfam" id="PF04810">
    <property type="entry name" value="zf-Sec23_Sec24"/>
    <property type="match status" value="1"/>
</dbReference>
<dbReference type="SUPFAM" id="SSF81995">
    <property type="entry name" value="beta-sandwich domain of Sec23/24"/>
    <property type="match status" value="1"/>
</dbReference>
<dbReference type="SUPFAM" id="SSF82754">
    <property type="entry name" value="C-terminal, gelsolin-like domain of Sec23/24"/>
    <property type="match status" value="1"/>
</dbReference>
<dbReference type="SUPFAM" id="SSF81811">
    <property type="entry name" value="Helical domain of Sec23/24"/>
    <property type="match status" value="1"/>
</dbReference>
<dbReference type="SUPFAM" id="SSF53300">
    <property type="entry name" value="vWA-like"/>
    <property type="match status" value="1"/>
</dbReference>
<dbReference type="SUPFAM" id="SSF82919">
    <property type="entry name" value="Zn-finger domain of Sec23/24"/>
    <property type="match status" value="1"/>
</dbReference>
<protein>
    <recommendedName>
        <fullName>Protein transport protein sec24</fullName>
    </recommendedName>
</protein>
<name>SEC24_ASPFU</name>
<sequence length="919" mass="100301">MASQQGGYPPQEGYGQPAGYGSPTQQHAGMAAGAPVQGHAGGKKKRAYAGEAFEIGSGANAALGGQLPAGGSYGAYPPQPQAAGYQQPVYGADPSQMNAAAPGYTAPVTPGIAQMTQQFGAMGVTDPHLMPPQPPQAAVAPQAPRPVPLNQLYPTDLLTQPFNVAELDYPPPPIVLPPGTSVYPSPTANCPPKYVRSTLNAVPTTHSLLKKSKLPFALVIQPYASLRDAEDPIPVIPDQVISRCRRCRSYINPFVTFLDHGHRWRCNMCNLTNDVPQAFDWDAALQKPADRSLRPDLNHAVVEFVAPQEYMVRPPQPLVYLFLIDVSYASVTNGLLATSARCIKESLDRIPNADRRTRLGFIAVDSSLHYFSIPRDGSENSDPRMLVISDLDEPFLPIPGDLLVTLSECRENIETFLDKLQEMFQNTQNNGCAMGSALRAGYKLIAPVGGKMTVLSSSLPNVGHGSLTMREDKKVLGTSKESSLLQTANSFYKSFAVECSKAQVSVDMFLFSSQYQDVASLSNLPRYTGGQTYFYPGWNAARGEDAIKFAREFSEYLSSEIGLEAVLRVRATTGLRMNTFYGNFFNRSSDLCAFPAFPRDQAYVVEVAIDETVTKPIVCLQTAVLHTTCNGERRIRVLTLALPTTQNLADVYASADQQAIATYFSHKAVERVLSSGLEPAREALQAKAVELLSTYRKELAGGSVSGGGLQFPANLRGLPVLFLAMIKNLGLRKSAQIPTDMRSAALCLLSTLPLPLLIQYIYPKMYSLHDMPDIAGLPDEQTGEIVLPPPVNLSSERIVPYGLYLIDDGQTQFLWVGRDAVPQLLLDVFGLPDRSQLRVGKQNLPELDNDFNQRVRAVIEKSRDHRSKGVGSIVVPHLYVVKEDGEPGLRLWAQTMLVEDRADQSVSLVQWMGSLREKV</sequence>
<proteinExistence type="inferred from homology"/>
<reference key="1">
    <citation type="journal article" date="2005" name="Nature">
        <title>Genomic sequence of the pathogenic and allergenic filamentous fungus Aspergillus fumigatus.</title>
        <authorList>
            <person name="Nierman W.C."/>
            <person name="Pain A."/>
            <person name="Anderson M.J."/>
            <person name="Wortman J.R."/>
            <person name="Kim H.S."/>
            <person name="Arroyo J."/>
            <person name="Berriman M."/>
            <person name="Abe K."/>
            <person name="Archer D.B."/>
            <person name="Bermejo C."/>
            <person name="Bennett J.W."/>
            <person name="Bowyer P."/>
            <person name="Chen D."/>
            <person name="Collins M."/>
            <person name="Coulsen R."/>
            <person name="Davies R."/>
            <person name="Dyer P.S."/>
            <person name="Farman M.L."/>
            <person name="Fedorova N."/>
            <person name="Fedorova N.D."/>
            <person name="Feldblyum T.V."/>
            <person name="Fischer R."/>
            <person name="Fosker N."/>
            <person name="Fraser A."/>
            <person name="Garcia J.L."/>
            <person name="Garcia M.J."/>
            <person name="Goble A."/>
            <person name="Goldman G.H."/>
            <person name="Gomi K."/>
            <person name="Griffith-Jones S."/>
            <person name="Gwilliam R."/>
            <person name="Haas B.J."/>
            <person name="Haas H."/>
            <person name="Harris D.E."/>
            <person name="Horiuchi H."/>
            <person name="Huang J."/>
            <person name="Humphray S."/>
            <person name="Jimenez J."/>
            <person name="Keller N."/>
            <person name="Khouri H."/>
            <person name="Kitamoto K."/>
            <person name="Kobayashi T."/>
            <person name="Konzack S."/>
            <person name="Kulkarni R."/>
            <person name="Kumagai T."/>
            <person name="Lafton A."/>
            <person name="Latge J.-P."/>
            <person name="Li W."/>
            <person name="Lord A."/>
            <person name="Lu C."/>
            <person name="Majoros W.H."/>
            <person name="May G.S."/>
            <person name="Miller B.L."/>
            <person name="Mohamoud Y."/>
            <person name="Molina M."/>
            <person name="Monod M."/>
            <person name="Mouyna I."/>
            <person name="Mulligan S."/>
            <person name="Murphy L.D."/>
            <person name="O'Neil S."/>
            <person name="Paulsen I."/>
            <person name="Penalva M.A."/>
            <person name="Pertea M."/>
            <person name="Price C."/>
            <person name="Pritchard B.L."/>
            <person name="Quail M.A."/>
            <person name="Rabbinowitsch E."/>
            <person name="Rawlins N."/>
            <person name="Rajandream M.A."/>
            <person name="Reichard U."/>
            <person name="Renauld H."/>
            <person name="Robson G.D."/>
            <person name="Rodriguez de Cordoba S."/>
            <person name="Rodriguez-Pena J.M."/>
            <person name="Ronning C.M."/>
            <person name="Rutter S."/>
            <person name="Salzberg S.L."/>
            <person name="Sanchez M."/>
            <person name="Sanchez-Ferrero J.C."/>
            <person name="Saunders D."/>
            <person name="Seeger K."/>
            <person name="Squares R."/>
            <person name="Squares S."/>
            <person name="Takeuchi M."/>
            <person name="Tekaia F."/>
            <person name="Turner G."/>
            <person name="Vazquez de Aldana C.R."/>
            <person name="Weidman J."/>
            <person name="White O."/>
            <person name="Woodward J.R."/>
            <person name="Yu J.-H."/>
            <person name="Fraser C.M."/>
            <person name="Galagan J.E."/>
            <person name="Asai K."/>
            <person name="Machida M."/>
            <person name="Hall N."/>
            <person name="Barrell B.G."/>
            <person name="Denning D.W."/>
        </authorList>
    </citation>
    <scope>NUCLEOTIDE SEQUENCE [LARGE SCALE GENOMIC DNA]</scope>
    <source>
        <strain>ATCC MYA-4609 / CBS 101355 / FGSC A1100 / Af293</strain>
    </source>
</reference>
<feature type="chain" id="PRO_0000295477" description="Protein transport protein sec24">
    <location>
        <begin position="1"/>
        <end position="919"/>
    </location>
</feature>
<feature type="region of interest" description="Disordered" evidence="2">
    <location>
        <begin position="1"/>
        <end position="43"/>
    </location>
</feature>
<feature type="region of interest" description="Zinc finger-like">
    <location>
        <begin position="244"/>
        <end position="269"/>
    </location>
</feature>
<feature type="compositionally biased region" description="Low complexity" evidence="2">
    <location>
        <begin position="1"/>
        <end position="21"/>
    </location>
</feature>
<feature type="binding site" evidence="1">
    <location>
        <position position="244"/>
    </location>
    <ligand>
        <name>Zn(2+)</name>
        <dbReference type="ChEBI" id="CHEBI:29105"/>
    </ligand>
</feature>
<feature type="binding site" evidence="1">
    <location>
        <position position="247"/>
    </location>
    <ligand>
        <name>Zn(2+)</name>
        <dbReference type="ChEBI" id="CHEBI:29105"/>
    </ligand>
</feature>
<feature type="binding site" evidence="1">
    <location>
        <position position="266"/>
    </location>
    <ligand>
        <name>Zn(2+)</name>
        <dbReference type="ChEBI" id="CHEBI:29105"/>
    </ligand>
</feature>
<feature type="binding site" evidence="1">
    <location>
        <position position="269"/>
    </location>
    <ligand>
        <name>Zn(2+)</name>
        <dbReference type="ChEBI" id="CHEBI:29105"/>
    </ligand>
</feature>
<gene>
    <name type="primary">sec24</name>
    <name type="ORF">AFUA_6G12830</name>
</gene>
<keyword id="KW-0963">Cytoplasm</keyword>
<keyword id="KW-0968">Cytoplasmic vesicle</keyword>
<keyword id="KW-0256">Endoplasmic reticulum</keyword>
<keyword id="KW-0931">ER-Golgi transport</keyword>
<keyword id="KW-0333">Golgi apparatus</keyword>
<keyword id="KW-0472">Membrane</keyword>
<keyword id="KW-0479">Metal-binding</keyword>
<keyword id="KW-0653">Protein transport</keyword>
<keyword id="KW-1185">Reference proteome</keyword>
<keyword id="KW-0813">Transport</keyword>
<keyword id="KW-0862">Zinc</keyword>
<accession>Q4WLP1</accession>
<organism>
    <name type="scientific">Aspergillus fumigatus (strain ATCC MYA-4609 / CBS 101355 / FGSC A1100 / Af293)</name>
    <name type="common">Neosartorya fumigata</name>
    <dbReference type="NCBI Taxonomy" id="330879"/>
    <lineage>
        <taxon>Eukaryota</taxon>
        <taxon>Fungi</taxon>
        <taxon>Dikarya</taxon>
        <taxon>Ascomycota</taxon>
        <taxon>Pezizomycotina</taxon>
        <taxon>Eurotiomycetes</taxon>
        <taxon>Eurotiomycetidae</taxon>
        <taxon>Eurotiales</taxon>
        <taxon>Aspergillaceae</taxon>
        <taxon>Aspergillus</taxon>
        <taxon>Aspergillus subgen. Fumigati</taxon>
    </lineage>
</organism>
<comment type="function">
    <text evidence="1">Component of the coat protein complex II (COPII) which promotes the formation of transport vesicles from the endoplasmic reticulum (ER). The coat has two main functions, the physical deformation of the endoplasmic reticulum membrane into vesicles and the selection of cargo molecules (By similarity).</text>
</comment>
<comment type="subunit">
    <text evidence="1">The COPII coat is composed of at least 5 proteins: the sec23/24 complex, the sec13/31 complex, and the protein sar1. Golgi apparatus membrane; Peripheral membrane protein; Cytoplasmic side.</text>
</comment>
<comment type="subcellular location">
    <subcellularLocation>
        <location evidence="1">Cytoplasm</location>
    </subcellularLocation>
    <subcellularLocation>
        <location evidence="1">Cytoplasmic vesicle</location>
        <location evidence="1">COPII-coated vesicle membrane</location>
        <topology evidence="1">Peripheral membrane protein</topology>
        <orientation evidence="1">Cytoplasmic side</orientation>
    </subcellularLocation>
    <subcellularLocation>
        <location evidence="1">Endoplasmic reticulum membrane</location>
        <topology evidence="1">Peripheral membrane protein</topology>
        <orientation evidence="1">Cytoplasmic side</orientation>
    </subcellularLocation>
    <subcellularLocation>
        <location evidence="1">Golgi apparatus membrane</location>
        <topology evidence="1">Peripheral membrane protein</topology>
        <orientation evidence="1">Cytoplasmic side</orientation>
    </subcellularLocation>
</comment>
<comment type="similarity">
    <text evidence="3">Belongs to the SEC23/SEC24 family. SEC24 subfamily.</text>
</comment>
<evidence type="ECO:0000250" key="1"/>
<evidence type="ECO:0000256" key="2">
    <source>
        <dbReference type="SAM" id="MobiDB-lite"/>
    </source>
</evidence>
<evidence type="ECO:0000305" key="3"/>